<accession>Q61451</accession>
<accession>Q61721</accession>
<comment type="function">
    <text evidence="1 3 4 5 6 7 8">Structural component of specialized membrane microdomains known as tetraspanin-enriched microdomains (TERMs), which act as platforms for receptor clustering and signaling (PubMed:36581203). Participates thereby in diverse biological functions such as cell signal transduction, adhesion, migration and protein trafficking (PubMed:32428859, PubMed:32532837). Plays a role in the activation of monocytes and B-cells (By similarity). Acts as an essential regulator of B-cell development by promoting interleukin-7 receptor/IL7R signaling (PubMed:31748347). Also promotes, in B-cells, the BCR signaling by recruiting PKC to the plasma membrane in order to phosphorylate its substrates (By similarity). Plays an essential role in lymphocyte homing to lymph nodes by stabilizing L-selectin/SELL cell surface expression (PubMed:32428859). Also mediates metabolic and inflammatory functions in hepatocytes and adipose tissue by promoting TNF-alpha and LPS signaling independent of the immune compartment (PubMed:36581203). Protects hematopoietic stem cell function in response to stress by facilitating DREAM complex activity through association with p130/RBL2 and its phosphatase PP2A (PubMed:36542833).</text>
</comment>
<comment type="subunit">
    <text evidence="1">Interacts with SCIMP. Interacts with CD45/PTPRC (By similarity). Interacts with IL7R (PubMed:31748347). Interacts with RBL2 and PPP2CA (PubMed:36542833).</text>
</comment>
<comment type="subcellular location">
    <subcellularLocation>
        <location evidence="3 4 7">Cell membrane</location>
    </subcellularLocation>
    <subcellularLocation>
        <location evidence="3">Cell junction</location>
    </subcellularLocation>
    <subcellularLocation>
        <location evidence="3">Membrane</location>
        <topology evidence="3">Multi-pass membrane protein</topology>
    </subcellularLocation>
    <text evidence="3">Concentrates in localized microdomains along the plasma membrane at the contact sites between cells of fused myotubes.</text>
</comment>
<comment type="induction">
    <text evidence="7">Expression rapidly increases in hematopoietic stem cells during stress.</text>
</comment>
<comment type="disruption phenotype">
    <text evidence="4 5 6 7">Lymph nodes of cd53-deleted mice are smaller than wild-type mice due to a marked reduction in B-cells and T-cells (PubMed:32428859). Cd53-deleted B-cell progenitors have diminished IL-7 signal transduction resulting in altered gene expression and increased apoptosis of developing B cells (PubMed:31748347). Mice have largely normal hematopoietic stem cells under homeostatic conditions but they display a prolonged cycling in response to stress (PubMed:36542833). Cd53-deficient myeloid cells have also a reduced capacity to undergo transendothelial migration (PubMed:32532837).</text>
</comment>
<comment type="similarity">
    <text evidence="9">Belongs to the tetraspanin (TM4SF) family.</text>
</comment>
<reference key="1">
    <citation type="journal article" date="1993" name="Int. Immunol.">
        <title>Gene structure, chromosomal localization, and protein sequence of mouse CD53 (Cd53): evidence that the transmembrane 4 superfamily arose by gene duplication.</title>
        <authorList>
            <person name="Wright M.D."/>
            <person name="Rochelle J.M."/>
            <person name="Tomlinson M.G."/>
            <person name="Seldin M.F."/>
            <person name="Williams A.F."/>
        </authorList>
    </citation>
    <scope>NUCLEOTIDE SEQUENCE [GENOMIC DNA]</scope>
    <source>
        <strain>129/Sv</strain>
    </source>
</reference>
<reference key="2">
    <citation type="journal article" date="2004" name="Genome Res.">
        <title>The status, quality, and expansion of the NIH full-length cDNA project: the Mammalian Gene Collection (MGC).</title>
        <authorList>
            <consortium name="The MGC Project Team"/>
        </authorList>
    </citation>
    <scope>NUCLEOTIDE SEQUENCE [LARGE SCALE MRNA]</scope>
    <source>
        <strain>C57BL/6J</strain>
        <tissue>Hematopoietic</tissue>
        <tissue>Mammary gland</tissue>
    </source>
</reference>
<reference key="3">
    <citation type="journal article" date="2012" name="J. Mol. Cell Biol.">
        <title>Comparative expression profiling identifies differential roles for Myogenin and p38alpha MAPK signaling in myogenesis.</title>
        <authorList>
            <person name="Liu Q.C."/>
            <person name="Zha X.H."/>
            <person name="Faralli H."/>
            <person name="Yin H."/>
            <person name="Louis-Jeune C."/>
            <person name="Perdiguero E."/>
            <person name="Pranckeviciene E."/>
            <person name="Munoz-Canoves P."/>
            <person name="Rudnicki M.A."/>
            <person name="Brand M."/>
            <person name="Perez-Iratxeta C."/>
            <person name="Dilworth F.J."/>
        </authorList>
    </citation>
    <scope>FUNCTION</scope>
    <scope>SUBCELLULAR LOCATION</scope>
</reference>
<reference key="4">
    <citation type="journal article" date="2020" name="IScience">
        <title>Tetraspanin CD53 Promotes Lymphocyte Recirculation by Stabilizing L-Selectin Surface Expression.</title>
        <authorList>
            <person name="Demaria M.C."/>
            <person name="Yeung L."/>
            <person name="Peeters R."/>
            <person name="Wee J.L."/>
            <person name="Mihaljcic M."/>
            <person name="Jones E.L."/>
            <person name="Nasa Z."/>
            <person name="Alderuccio F."/>
            <person name="Hall P."/>
            <person name="Smith B.C."/>
            <person name="Binger K.J."/>
            <person name="Hammerling G."/>
            <person name="Kwok H.F."/>
            <person name="Newman A."/>
            <person name="Ager A."/>
            <person name="van Spriel A."/>
            <person name="Hickey M.J."/>
            <person name="Wright M.D."/>
        </authorList>
    </citation>
    <scope>FUNCTION</scope>
    <scope>DISRUPTION PHENOTYPE</scope>
</reference>
<reference key="5">
    <citation type="journal article" date="2020" name="J. Immunol.">
        <title>Leukocyte Tetraspanin CD53 Restrains alpha3 Integrin Mobilization and Facilitates Cytoskeletal Remodeling and Transmigration in Mice.</title>
        <authorList>
            <person name="Yeung L."/>
            <person name="Anderson J.M.L."/>
            <person name="Wee J.L."/>
            <person name="Demaria M.C."/>
            <person name="Finsterbusch M."/>
            <person name="Liu Y.S."/>
            <person name="Hall P."/>
            <person name="Smith B.C."/>
            <person name="Dankers W."/>
            <person name="Elgass K.D."/>
            <person name="Wicks I.P."/>
            <person name="Kwok H.F."/>
            <person name="Wright M.D."/>
            <person name="Hickey M.J."/>
        </authorList>
    </citation>
    <scope>FUNCTION</scope>
    <scope>DISRUPTION PHENOTYPE</scope>
</reference>
<reference key="6">
    <citation type="journal article" date="2020" name="J. Immunol.">
        <title>The Tetraspanin CD53 Regulates Early B Cell Development by Promoting IL-7R Signaling.</title>
        <authorList>
            <person name="Greenberg Z.J."/>
            <person name="Monlish D.A."/>
            <person name="Bartnett R.L."/>
            <person name="Yang Y."/>
            <person name="Shen G."/>
            <person name="Li W."/>
            <person name="Bednarski J.J."/>
            <person name="Schuettpelz L.G."/>
        </authorList>
    </citation>
    <scope>FUNCTION</scope>
    <scope>DISRUPTION PHENOTYPE</scope>
    <scope>SUBCELLULAR LOCATION</scope>
    <scope>INTERACTION WITH IL7R</scope>
</reference>
<reference key="7">
    <citation type="journal article" date="2023" name="J. Biol. Chem.">
        <title>The tetraspanin transmembrane protein CD53 mediates dyslipidemia and integrates inflammatory and metabolic signaling in hepatocytes.</title>
        <authorList>
            <person name="Higgins C.B."/>
            <person name="Adams J.A."/>
            <person name="Ward M.H."/>
            <person name="Greenberg Z.J."/>
            <person name="Milewska M."/>
            <person name="Sun J."/>
            <person name="Zhang Y."/>
            <person name="Chiquetto Paracatu L."/>
            <person name="Dong Q."/>
            <person name="Ballentine S."/>
            <person name="Li W."/>
            <person name="Wandzik I."/>
            <person name="Schuettpelz L.G."/>
            <person name="DeBosch B.J."/>
        </authorList>
    </citation>
    <scope>FUNCTION</scope>
</reference>
<reference key="8">
    <citation type="journal article" date="2023" name="Blood">
        <title>The tetraspanin CD53 protects stressed hematopoietic stem cells via promotion of DREAM complex-mediated quiescence.</title>
        <authorList>
            <person name="Greenberg Z.J."/>
            <person name="Paracatu L.C."/>
            <person name="Monlish D.A."/>
            <person name="Dong Q."/>
            <person name="Rettig M."/>
            <person name="Roundy N."/>
            <person name="Gaballa R."/>
            <person name="Li W."/>
            <person name="Yang W."/>
            <person name="Luke C.J."/>
            <person name="Schuettpelz L.G."/>
        </authorList>
    </citation>
    <scope>FUNCTION</scope>
    <scope>DISRUPTION PHENOTYPE</scope>
    <scope>INTERACTION WITH RBL2 AND PPP2CA</scope>
    <scope>INDUCTION BY STRESS</scope>
    <scope>SUBCELLULAR LOCATION</scope>
</reference>
<protein>
    <recommendedName>
        <fullName>Leukocyte surface antigen CD53</fullName>
    </recommendedName>
    <alternativeName>
        <fullName>Cell surface glycoprotein CD53</fullName>
    </alternativeName>
    <cdAntigenName>CD53</cdAntigenName>
</protein>
<name>CD53_MOUSE</name>
<proteinExistence type="evidence at protein level"/>
<sequence length="219" mass="24164">MGMSSLKLLKYVLFIFNLLFWVCGCCILGFGIYFLVQNTYGVLFRNLPFLTLGNILVIVGSIIMVVAFLGCMGSIKENKCLLMSFFVLLLIILLAEVTIAILLFVYEQKLNTLVAEGLNDSIQHYHSDNSTMKAWDFIQTQLQCCGVNGSSDWTSGPPSSCPSGADVQGCYNKAKSWFHSNFLYIGIITICVCVIQVLGMSFALTLNCQIDKTSQALGL</sequence>
<gene>
    <name type="primary">Cd53</name>
</gene>
<dbReference type="EMBL" id="X97227">
    <property type="protein sequence ID" value="CAA65864.1"/>
    <property type="molecule type" value="mRNA"/>
</dbReference>
<dbReference type="EMBL" id="Z16078">
    <property type="protein sequence ID" value="CAA78892.1"/>
    <property type="molecule type" value="Genomic_DNA"/>
</dbReference>
<dbReference type="EMBL" id="BC021310">
    <property type="protein sequence ID" value="AAH21310.1"/>
    <property type="molecule type" value="mRNA"/>
</dbReference>
<dbReference type="EMBL" id="BC052905">
    <property type="protein sequence ID" value="AAH52905.1"/>
    <property type="molecule type" value="mRNA"/>
</dbReference>
<dbReference type="CCDS" id="CCDS17728.1"/>
<dbReference type="RefSeq" id="NP_031677.1">
    <property type="nucleotide sequence ID" value="NM_007651.3"/>
</dbReference>
<dbReference type="SMR" id="Q61451"/>
<dbReference type="FunCoup" id="Q61451">
    <property type="interactions" value="178"/>
</dbReference>
<dbReference type="STRING" id="10090.ENSMUSP00000035781"/>
<dbReference type="GlyCosmos" id="Q61451">
    <property type="glycosylation" value="3 sites, No reported glycans"/>
</dbReference>
<dbReference type="GlyGen" id="Q61451">
    <property type="glycosylation" value="3 sites"/>
</dbReference>
<dbReference type="PhosphoSitePlus" id="Q61451"/>
<dbReference type="PaxDb" id="10090-ENSMUSP00000035781"/>
<dbReference type="Antibodypedia" id="20101">
    <property type="antibodies" value="737 antibodies from 34 providers"/>
</dbReference>
<dbReference type="DNASU" id="12508"/>
<dbReference type="Ensembl" id="ENSMUST00000038845.10">
    <property type="protein sequence ID" value="ENSMUSP00000035781.9"/>
    <property type="gene ID" value="ENSMUSG00000040747.10"/>
</dbReference>
<dbReference type="GeneID" id="12508"/>
<dbReference type="KEGG" id="mmu:12508"/>
<dbReference type="UCSC" id="uc008qwm.2">
    <property type="organism name" value="mouse"/>
</dbReference>
<dbReference type="AGR" id="MGI:88341"/>
<dbReference type="CTD" id="963"/>
<dbReference type="MGI" id="MGI:88341">
    <property type="gene designation" value="Cd53"/>
</dbReference>
<dbReference type="VEuPathDB" id="HostDB:ENSMUSG00000040747"/>
<dbReference type="eggNOG" id="KOG3882">
    <property type="taxonomic scope" value="Eukaryota"/>
</dbReference>
<dbReference type="GeneTree" id="ENSGT00940000159669"/>
<dbReference type="HOGENOM" id="CLU_055524_4_3_1"/>
<dbReference type="InParanoid" id="Q61451"/>
<dbReference type="OMA" id="IQSFLHC"/>
<dbReference type="OrthoDB" id="432835at2759"/>
<dbReference type="PhylomeDB" id="Q61451"/>
<dbReference type="TreeFam" id="TF352892"/>
<dbReference type="Reactome" id="R-MMU-6798695">
    <property type="pathway name" value="Neutrophil degranulation"/>
</dbReference>
<dbReference type="BioGRID-ORCS" id="12508">
    <property type="hits" value="3 hits in 78 CRISPR screens"/>
</dbReference>
<dbReference type="ChiTaRS" id="Cd53">
    <property type="organism name" value="mouse"/>
</dbReference>
<dbReference type="PRO" id="PR:Q61451"/>
<dbReference type="Proteomes" id="UP000000589">
    <property type="component" value="Chromosome 3"/>
</dbReference>
<dbReference type="RNAct" id="Q61451">
    <property type="molecule type" value="protein"/>
</dbReference>
<dbReference type="Bgee" id="ENSMUSG00000040747">
    <property type="expression patterns" value="Expressed in granulocyte and 208 other cell types or tissues"/>
</dbReference>
<dbReference type="ExpressionAtlas" id="Q61451">
    <property type="expression patterns" value="baseline and differential"/>
</dbReference>
<dbReference type="GO" id="GO:0005911">
    <property type="term" value="C:cell-cell junction"/>
    <property type="evidence" value="ECO:0000314"/>
    <property type="project" value="UniProtKB"/>
</dbReference>
<dbReference type="GO" id="GO:0001772">
    <property type="term" value="C:immunological synapse"/>
    <property type="evidence" value="ECO:0007669"/>
    <property type="project" value="Ensembl"/>
</dbReference>
<dbReference type="GO" id="GO:0005886">
    <property type="term" value="C:plasma membrane"/>
    <property type="evidence" value="ECO:0000314"/>
    <property type="project" value="UniProtKB"/>
</dbReference>
<dbReference type="GO" id="GO:0042802">
    <property type="term" value="F:identical protein binding"/>
    <property type="evidence" value="ECO:0007669"/>
    <property type="project" value="Ensembl"/>
</dbReference>
<dbReference type="GO" id="GO:0043495">
    <property type="term" value="F:protein-membrane adaptor activity"/>
    <property type="evidence" value="ECO:0007669"/>
    <property type="project" value="Ensembl"/>
</dbReference>
<dbReference type="GO" id="GO:1901741">
    <property type="term" value="P:positive regulation of myoblast fusion"/>
    <property type="evidence" value="ECO:0000314"/>
    <property type="project" value="UniProtKB"/>
</dbReference>
<dbReference type="GO" id="GO:0043113">
    <property type="term" value="P:receptor clustering"/>
    <property type="evidence" value="ECO:0007669"/>
    <property type="project" value="Ensembl"/>
</dbReference>
<dbReference type="CDD" id="cd03164">
    <property type="entry name" value="CD53_like_LEL"/>
    <property type="match status" value="1"/>
</dbReference>
<dbReference type="FunFam" id="1.10.1450.10:FF:000024">
    <property type="entry name" value="Tetraspanin"/>
    <property type="match status" value="1"/>
</dbReference>
<dbReference type="Gene3D" id="1.10.1450.10">
    <property type="entry name" value="Tetraspanin"/>
    <property type="match status" value="1"/>
</dbReference>
<dbReference type="InterPro" id="IPR018499">
    <property type="entry name" value="Tetraspanin/Peripherin"/>
</dbReference>
<dbReference type="InterPro" id="IPR000301">
    <property type="entry name" value="Tetraspanin_animals"/>
</dbReference>
<dbReference type="InterPro" id="IPR018503">
    <property type="entry name" value="Tetraspanin_CS"/>
</dbReference>
<dbReference type="InterPro" id="IPR008952">
    <property type="entry name" value="Tetraspanin_EC2_sf"/>
</dbReference>
<dbReference type="PANTHER" id="PTHR19282:SF39">
    <property type="entry name" value="LEUKOCYTE SURFACE ANTIGEN CD53"/>
    <property type="match status" value="1"/>
</dbReference>
<dbReference type="PANTHER" id="PTHR19282">
    <property type="entry name" value="TETRASPANIN"/>
    <property type="match status" value="1"/>
</dbReference>
<dbReference type="Pfam" id="PF00335">
    <property type="entry name" value="Tetraspanin"/>
    <property type="match status" value="1"/>
</dbReference>
<dbReference type="PIRSF" id="PIRSF002419">
    <property type="entry name" value="Tetraspanin"/>
    <property type="match status" value="1"/>
</dbReference>
<dbReference type="PRINTS" id="PR00259">
    <property type="entry name" value="TMFOUR"/>
</dbReference>
<dbReference type="SUPFAM" id="SSF48652">
    <property type="entry name" value="Tetraspanin"/>
    <property type="match status" value="1"/>
</dbReference>
<dbReference type="PROSITE" id="PS00421">
    <property type="entry name" value="TM4_1"/>
    <property type="match status" value="1"/>
</dbReference>
<organism>
    <name type="scientific">Mus musculus</name>
    <name type="common">Mouse</name>
    <dbReference type="NCBI Taxonomy" id="10090"/>
    <lineage>
        <taxon>Eukaryota</taxon>
        <taxon>Metazoa</taxon>
        <taxon>Chordata</taxon>
        <taxon>Craniata</taxon>
        <taxon>Vertebrata</taxon>
        <taxon>Euteleostomi</taxon>
        <taxon>Mammalia</taxon>
        <taxon>Eutheria</taxon>
        <taxon>Euarchontoglires</taxon>
        <taxon>Glires</taxon>
        <taxon>Rodentia</taxon>
        <taxon>Myomorpha</taxon>
        <taxon>Muroidea</taxon>
        <taxon>Muridae</taxon>
        <taxon>Murinae</taxon>
        <taxon>Mus</taxon>
        <taxon>Mus</taxon>
    </lineage>
</organism>
<evidence type="ECO:0000250" key="1">
    <source>
        <dbReference type="UniProtKB" id="P19397"/>
    </source>
</evidence>
<evidence type="ECO:0000255" key="2"/>
<evidence type="ECO:0000269" key="3">
    <source>
    </source>
</evidence>
<evidence type="ECO:0000269" key="4">
    <source>
    </source>
</evidence>
<evidence type="ECO:0000269" key="5">
    <source>
    </source>
</evidence>
<evidence type="ECO:0000269" key="6">
    <source>
    </source>
</evidence>
<evidence type="ECO:0000269" key="7">
    <source>
    </source>
</evidence>
<evidence type="ECO:0000269" key="8">
    <source>
    </source>
</evidence>
<evidence type="ECO:0000305" key="9"/>
<feature type="chain" id="PRO_0000219213" description="Leukocyte surface antigen CD53">
    <location>
        <begin position="1"/>
        <end position="219"/>
    </location>
</feature>
<feature type="topological domain" description="Cytoplasmic" evidence="2">
    <location>
        <begin position="1"/>
        <end position="11"/>
    </location>
</feature>
<feature type="transmembrane region" description="Helical" evidence="2">
    <location>
        <begin position="12"/>
        <end position="32"/>
    </location>
</feature>
<feature type="topological domain" description="Extracellular" evidence="2">
    <location>
        <begin position="33"/>
        <end position="54"/>
    </location>
</feature>
<feature type="transmembrane region" description="Helical" evidence="2">
    <location>
        <begin position="55"/>
        <end position="69"/>
    </location>
</feature>
<feature type="topological domain" description="Cytoplasmic" evidence="2">
    <location>
        <begin position="70"/>
        <end position="80"/>
    </location>
</feature>
<feature type="transmembrane region" description="Helical" evidence="2">
    <location>
        <begin position="81"/>
        <end position="106"/>
    </location>
</feature>
<feature type="topological domain" description="Extracellular" evidence="2">
    <location>
        <begin position="107"/>
        <end position="181"/>
    </location>
</feature>
<feature type="transmembrane region" description="Helical" evidence="2">
    <location>
        <begin position="182"/>
        <end position="206"/>
    </location>
</feature>
<feature type="topological domain" description="Cytoplasmic" evidence="2">
    <location>
        <begin position="207"/>
        <end position="219"/>
    </location>
</feature>
<feature type="glycosylation site" description="N-linked (GlcNAc...) asparagine" evidence="2">
    <location>
        <position position="119"/>
    </location>
</feature>
<feature type="glycosylation site" description="N-linked (GlcNAc...) asparagine" evidence="2">
    <location>
        <position position="129"/>
    </location>
</feature>
<feature type="glycosylation site" description="N-linked (GlcNAc...) asparagine" evidence="2">
    <location>
        <position position="148"/>
    </location>
</feature>
<keyword id="KW-0965">Cell junction</keyword>
<keyword id="KW-1003">Cell membrane</keyword>
<keyword id="KW-0325">Glycoprotein</keyword>
<keyword id="KW-0472">Membrane</keyword>
<keyword id="KW-1185">Reference proteome</keyword>
<keyword id="KW-0812">Transmembrane</keyword>
<keyword id="KW-1133">Transmembrane helix</keyword>